<dbReference type="EC" id="1.3.1.38"/>
<dbReference type="EMBL" id="CU329671">
    <property type="protein sequence ID" value="CAA22811.1"/>
    <property type="molecule type" value="Genomic_DNA"/>
</dbReference>
<dbReference type="PIR" id="T40583">
    <property type="entry name" value="T40583"/>
</dbReference>
<dbReference type="SMR" id="O94511"/>
<dbReference type="BioGRID" id="277585">
    <property type="interactions" value="5"/>
</dbReference>
<dbReference type="FunCoup" id="O94511">
    <property type="interactions" value="69"/>
</dbReference>
<dbReference type="STRING" id="284812.O94511"/>
<dbReference type="iPTMnet" id="O94511"/>
<dbReference type="PaxDb" id="4896-SPBC646.07c.1"/>
<dbReference type="EnsemblFungi" id="SPBC646.07c.1">
    <property type="protein sequence ID" value="SPBC646.07c.1:pep"/>
    <property type="gene ID" value="SPBC646.07c"/>
</dbReference>
<dbReference type="KEGG" id="spo:2541070"/>
<dbReference type="PomBase" id="SPBC646.07c"/>
<dbReference type="VEuPathDB" id="FungiDB:SPBC646.07c"/>
<dbReference type="eggNOG" id="KOG1639">
    <property type="taxonomic scope" value="Eukaryota"/>
</dbReference>
<dbReference type="HOGENOM" id="CLU_059260_0_0_1"/>
<dbReference type="InParanoid" id="O94511"/>
<dbReference type="OMA" id="ATMPIFN"/>
<dbReference type="PhylomeDB" id="O94511"/>
<dbReference type="Reactome" id="R-SPO-75876">
    <property type="pathway name" value="Synthesis of very long-chain fatty acyl-CoAs"/>
</dbReference>
<dbReference type="PRO" id="PR:O94511"/>
<dbReference type="Proteomes" id="UP000002485">
    <property type="component" value="Chromosome II"/>
</dbReference>
<dbReference type="GO" id="GO:0005783">
    <property type="term" value="C:endoplasmic reticulum"/>
    <property type="evidence" value="ECO:0007005"/>
    <property type="project" value="PomBase"/>
</dbReference>
<dbReference type="GO" id="GO:0005789">
    <property type="term" value="C:endoplasmic reticulum membrane"/>
    <property type="evidence" value="ECO:0000266"/>
    <property type="project" value="PomBase"/>
</dbReference>
<dbReference type="GO" id="GO:0005739">
    <property type="term" value="C:mitochondrion"/>
    <property type="evidence" value="ECO:0000266"/>
    <property type="project" value="PomBase"/>
</dbReference>
<dbReference type="GO" id="GO:0016491">
    <property type="term" value="F:oxidoreductase activity"/>
    <property type="evidence" value="ECO:0000318"/>
    <property type="project" value="GO_Central"/>
</dbReference>
<dbReference type="GO" id="GO:0019166">
    <property type="term" value="F:trans-2-enoyl-CoA reductase (NADPH) activity"/>
    <property type="evidence" value="ECO:0007669"/>
    <property type="project" value="UniProtKB-EC"/>
</dbReference>
<dbReference type="GO" id="GO:0030497">
    <property type="term" value="P:fatty acid elongation"/>
    <property type="evidence" value="ECO:0000303"/>
    <property type="project" value="PomBase"/>
</dbReference>
<dbReference type="GO" id="GO:0042761">
    <property type="term" value="P:very long-chain fatty acid biosynthetic process"/>
    <property type="evidence" value="ECO:0000318"/>
    <property type="project" value="GO_Central"/>
</dbReference>
<dbReference type="CDD" id="cd01801">
    <property type="entry name" value="Ubl_TECR_like"/>
    <property type="match status" value="1"/>
</dbReference>
<dbReference type="Gene3D" id="1.20.120.1630">
    <property type="match status" value="1"/>
</dbReference>
<dbReference type="InterPro" id="IPR001104">
    <property type="entry name" value="3-oxo-5_a-steroid_4-DH_C"/>
</dbReference>
<dbReference type="InterPro" id="IPR039357">
    <property type="entry name" value="SRD5A/TECR"/>
</dbReference>
<dbReference type="InterPro" id="IPR000626">
    <property type="entry name" value="Ubiquitin-like_dom"/>
</dbReference>
<dbReference type="InterPro" id="IPR029071">
    <property type="entry name" value="Ubiquitin-like_domsf"/>
</dbReference>
<dbReference type="PANTHER" id="PTHR10556">
    <property type="entry name" value="3-OXO-5-ALPHA-STEROID 4-DEHYDROGENASE"/>
    <property type="match status" value="1"/>
</dbReference>
<dbReference type="PANTHER" id="PTHR10556:SF28">
    <property type="entry name" value="VERY-LONG-CHAIN ENOYL-COA REDUCTASE"/>
    <property type="match status" value="1"/>
</dbReference>
<dbReference type="Pfam" id="PF02544">
    <property type="entry name" value="Steroid_dh"/>
    <property type="match status" value="1"/>
</dbReference>
<dbReference type="SUPFAM" id="SSF54236">
    <property type="entry name" value="Ubiquitin-like"/>
    <property type="match status" value="1"/>
</dbReference>
<dbReference type="PROSITE" id="PS50244">
    <property type="entry name" value="S5A_REDUCTASE"/>
    <property type="match status" value="1"/>
</dbReference>
<organism>
    <name type="scientific">Schizosaccharomyces pombe (strain 972 / ATCC 24843)</name>
    <name type="common">Fission yeast</name>
    <dbReference type="NCBI Taxonomy" id="284812"/>
    <lineage>
        <taxon>Eukaryota</taxon>
        <taxon>Fungi</taxon>
        <taxon>Dikarya</taxon>
        <taxon>Ascomycota</taxon>
        <taxon>Taphrinomycotina</taxon>
        <taxon>Schizosaccharomycetes</taxon>
        <taxon>Schizosaccharomycetales</taxon>
        <taxon>Schizosaccharomycetaceae</taxon>
        <taxon>Schizosaccharomyces</taxon>
    </lineage>
</organism>
<proteinExistence type="inferred from homology"/>
<keyword id="KW-0256">Endoplasmic reticulum</keyword>
<keyword id="KW-0444">Lipid biosynthesis</keyword>
<keyword id="KW-0443">Lipid metabolism</keyword>
<keyword id="KW-0472">Membrane</keyword>
<keyword id="KW-0521">NADP</keyword>
<keyword id="KW-0560">Oxidoreductase</keyword>
<keyword id="KW-1185">Reference proteome</keyword>
<keyword id="KW-0812">Transmembrane</keyword>
<keyword id="KW-1133">Transmembrane helix</keyword>
<sequence>MSITLSSRGRKIRKLPKSLEFPLDGSIDKLRDEVSSVTRLPVERLRFSTADGTTLLPNTTLRKYGVGPGATIWVKDLGPQIGWRTVFMIEYLGPLVIHLFFILNYKWIYRKDYNLCLNQKIAFVLVMLHFMKREYESIFVHRFSLATMPLRNIFKNCAHYHLLSGLFLAYFIYGPWHANDYIKPNHLLFLIVGWAFAVLSNFRTHIILRDLRPAGSKKRVIPTGYGFNLVSFPNYFFESLGWLFFALLTKSWASWIFLFVGSAQMFVWAKKKHARYLKEFPNYPRSRKIMIPFFL</sequence>
<reference key="1">
    <citation type="journal article" date="2002" name="Nature">
        <title>The genome sequence of Schizosaccharomyces pombe.</title>
        <authorList>
            <person name="Wood V."/>
            <person name="Gwilliam R."/>
            <person name="Rajandream M.A."/>
            <person name="Lyne M.H."/>
            <person name="Lyne R."/>
            <person name="Stewart A."/>
            <person name="Sgouros J.G."/>
            <person name="Peat N."/>
            <person name="Hayles J."/>
            <person name="Baker S.G."/>
            <person name="Basham D."/>
            <person name="Bowman S."/>
            <person name="Brooks K."/>
            <person name="Brown D."/>
            <person name="Brown S."/>
            <person name="Chillingworth T."/>
            <person name="Churcher C.M."/>
            <person name="Collins M."/>
            <person name="Connor R."/>
            <person name="Cronin A."/>
            <person name="Davis P."/>
            <person name="Feltwell T."/>
            <person name="Fraser A."/>
            <person name="Gentles S."/>
            <person name="Goble A."/>
            <person name="Hamlin N."/>
            <person name="Harris D.E."/>
            <person name="Hidalgo J."/>
            <person name="Hodgson G."/>
            <person name="Holroyd S."/>
            <person name="Hornsby T."/>
            <person name="Howarth S."/>
            <person name="Huckle E.J."/>
            <person name="Hunt S."/>
            <person name="Jagels K."/>
            <person name="James K.D."/>
            <person name="Jones L."/>
            <person name="Jones M."/>
            <person name="Leather S."/>
            <person name="McDonald S."/>
            <person name="McLean J."/>
            <person name="Mooney P."/>
            <person name="Moule S."/>
            <person name="Mungall K.L."/>
            <person name="Murphy L.D."/>
            <person name="Niblett D."/>
            <person name="Odell C."/>
            <person name="Oliver K."/>
            <person name="O'Neil S."/>
            <person name="Pearson D."/>
            <person name="Quail M.A."/>
            <person name="Rabbinowitsch E."/>
            <person name="Rutherford K.M."/>
            <person name="Rutter S."/>
            <person name="Saunders D."/>
            <person name="Seeger K."/>
            <person name="Sharp S."/>
            <person name="Skelton J."/>
            <person name="Simmonds M.N."/>
            <person name="Squares R."/>
            <person name="Squares S."/>
            <person name="Stevens K."/>
            <person name="Taylor K."/>
            <person name="Taylor R.G."/>
            <person name="Tivey A."/>
            <person name="Walsh S.V."/>
            <person name="Warren T."/>
            <person name="Whitehead S."/>
            <person name="Woodward J.R."/>
            <person name="Volckaert G."/>
            <person name="Aert R."/>
            <person name="Robben J."/>
            <person name="Grymonprez B."/>
            <person name="Weltjens I."/>
            <person name="Vanstreels E."/>
            <person name="Rieger M."/>
            <person name="Schaefer M."/>
            <person name="Mueller-Auer S."/>
            <person name="Gabel C."/>
            <person name="Fuchs M."/>
            <person name="Duesterhoeft A."/>
            <person name="Fritzc C."/>
            <person name="Holzer E."/>
            <person name="Moestl D."/>
            <person name="Hilbert H."/>
            <person name="Borzym K."/>
            <person name="Langer I."/>
            <person name="Beck A."/>
            <person name="Lehrach H."/>
            <person name="Reinhardt R."/>
            <person name="Pohl T.M."/>
            <person name="Eger P."/>
            <person name="Zimmermann W."/>
            <person name="Wedler H."/>
            <person name="Wambutt R."/>
            <person name="Purnelle B."/>
            <person name="Goffeau A."/>
            <person name="Cadieu E."/>
            <person name="Dreano S."/>
            <person name="Gloux S."/>
            <person name="Lelaure V."/>
            <person name="Mottier S."/>
            <person name="Galibert F."/>
            <person name="Aves S.J."/>
            <person name="Xiang Z."/>
            <person name="Hunt C."/>
            <person name="Moore K."/>
            <person name="Hurst S.M."/>
            <person name="Lucas M."/>
            <person name="Rochet M."/>
            <person name="Gaillardin C."/>
            <person name="Tallada V.A."/>
            <person name="Garzon A."/>
            <person name="Thode G."/>
            <person name="Daga R.R."/>
            <person name="Cruzado L."/>
            <person name="Jimenez J."/>
            <person name="Sanchez M."/>
            <person name="del Rey F."/>
            <person name="Benito J."/>
            <person name="Dominguez A."/>
            <person name="Revuelta J.L."/>
            <person name="Moreno S."/>
            <person name="Armstrong J."/>
            <person name="Forsburg S.L."/>
            <person name="Cerutti L."/>
            <person name="Lowe T."/>
            <person name="McCombie W.R."/>
            <person name="Paulsen I."/>
            <person name="Potashkin J."/>
            <person name="Shpakovski G.V."/>
            <person name="Ussery D."/>
            <person name="Barrell B.G."/>
            <person name="Nurse P."/>
        </authorList>
    </citation>
    <scope>NUCLEOTIDE SEQUENCE [LARGE SCALE GENOMIC DNA]</scope>
    <source>
        <strain>972 / ATCC 24843</strain>
    </source>
</reference>
<reference key="2">
    <citation type="journal article" date="2006" name="Nat. Biotechnol.">
        <title>ORFeome cloning and global analysis of protein localization in the fission yeast Schizosaccharomyces pombe.</title>
        <authorList>
            <person name="Matsuyama A."/>
            <person name="Arai R."/>
            <person name="Yashiroda Y."/>
            <person name="Shirai A."/>
            <person name="Kamata A."/>
            <person name="Sekido S."/>
            <person name="Kobayashi Y."/>
            <person name="Hashimoto A."/>
            <person name="Hamamoto M."/>
            <person name="Hiraoka Y."/>
            <person name="Horinouchi S."/>
            <person name="Yoshida M."/>
        </authorList>
    </citation>
    <scope>SUBCELLULAR LOCATION [LARGE SCALE ANALYSIS]</scope>
</reference>
<feature type="chain" id="PRO_0000317698" description="Putative enoyl reductase C646.07c">
    <location>
        <begin position="1"/>
        <end position="295"/>
    </location>
</feature>
<feature type="topological domain" description="Cytoplasmic" evidence="1">
    <location>
        <begin position="1"/>
        <end position="84"/>
    </location>
</feature>
<feature type="transmembrane region" description="Helical" evidence="1">
    <location>
        <begin position="85"/>
        <end position="105"/>
    </location>
</feature>
<feature type="topological domain" description="Lumenal" evidence="1">
    <location>
        <begin position="106"/>
        <end position="157"/>
    </location>
</feature>
<feature type="transmembrane region" description="Helical" evidence="1">
    <location>
        <begin position="158"/>
        <end position="178"/>
    </location>
</feature>
<feature type="topological domain" description="Cytoplasmic" evidence="1">
    <location>
        <begin position="179"/>
        <end position="186"/>
    </location>
</feature>
<feature type="transmembrane region" description="Helical" evidence="1">
    <location>
        <begin position="187"/>
        <end position="207"/>
    </location>
</feature>
<feature type="topological domain" description="Lumenal" evidence="1">
    <location>
        <begin position="208"/>
        <end position="223"/>
    </location>
</feature>
<feature type="transmembrane region" description="Helical" evidence="1">
    <location>
        <begin position="224"/>
        <end position="246"/>
    </location>
</feature>
<feature type="topological domain" description="Cytoplasmic" evidence="1">
    <location>
        <begin position="247"/>
        <end position="250"/>
    </location>
</feature>
<feature type="transmembrane region" description="Helical" evidence="1">
    <location>
        <begin position="251"/>
        <end position="268"/>
    </location>
</feature>
<feature type="topological domain" description="Lumenal" evidence="1">
    <location>
        <begin position="269"/>
        <end position="295"/>
    </location>
</feature>
<name>YN67_SCHPO</name>
<comment type="catalytic activity">
    <reaction>
        <text>a (2E)-enoyl-CoA + NADPH + H(+) = a 2,3-saturated acyl-CoA + NADP(+)</text>
        <dbReference type="Rhea" id="RHEA:33763"/>
        <dbReference type="ChEBI" id="CHEBI:15378"/>
        <dbReference type="ChEBI" id="CHEBI:57783"/>
        <dbReference type="ChEBI" id="CHEBI:58349"/>
        <dbReference type="ChEBI" id="CHEBI:58856"/>
        <dbReference type="ChEBI" id="CHEBI:65111"/>
        <dbReference type="EC" id="1.3.1.38"/>
    </reaction>
</comment>
<comment type="subcellular location">
    <subcellularLocation>
        <location evidence="2">Endoplasmic reticulum membrane</location>
        <topology evidence="2">Multi-pass membrane protein</topology>
    </subcellularLocation>
</comment>
<comment type="similarity">
    <text evidence="3">Belongs to the steroid 5-alpha reductase family.</text>
</comment>
<accession>O94511</accession>
<protein>
    <recommendedName>
        <fullName>Putative enoyl reductase C646.07c</fullName>
        <ecNumber>1.3.1.38</ecNumber>
    </recommendedName>
</protein>
<gene>
    <name type="ORF">SPBC646.07c</name>
</gene>
<evidence type="ECO:0000255" key="1"/>
<evidence type="ECO:0000269" key="2">
    <source>
    </source>
</evidence>
<evidence type="ECO:0000305" key="3"/>